<protein>
    <recommendedName>
        <fullName evidence="1">Phenylalanine--tRNA ligase beta subunit</fullName>
        <ecNumber evidence="1">6.1.1.20</ecNumber>
    </recommendedName>
    <alternativeName>
        <fullName evidence="1">Phenylalanyl-tRNA synthetase beta subunit</fullName>
        <shortName evidence="1">PheRS</shortName>
    </alternativeName>
</protein>
<reference key="1">
    <citation type="journal article" date="2004" name="Nucleic Acids Res.">
        <title>Genome sequence of Symbiobacterium thermophilum, an uncultivable bacterium that depends on microbial commensalism.</title>
        <authorList>
            <person name="Ueda K."/>
            <person name="Yamashita A."/>
            <person name="Ishikawa J."/>
            <person name="Shimada M."/>
            <person name="Watsuji T."/>
            <person name="Morimura K."/>
            <person name="Ikeda H."/>
            <person name="Hattori M."/>
            <person name="Beppu T."/>
        </authorList>
    </citation>
    <scope>NUCLEOTIDE SEQUENCE [LARGE SCALE GENOMIC DNA]</scope>
    <source>
        <strain>DSM 24528 / JCM 14929 / IAM 14863 / T</strain>
    </source>
</reference>
<feature type="chain" id="PRO_0000232822" description="Phenylalanine--tRNA ligase beta subunit">
    <location>
        <begin position="1"/>
        <end position="892"/>
    </location>
</feature>
<feature type="domain" description="tRNA-binding" evidence="1">
    <location>
        <begin position="39"/>
        <end position="150"/>
    </location>
</feature>
<feature type="domain" description="B5" evidence="1">
    <location>
        <begin position="406"/>
        <end position="569"/>
    </location>
</feature>
<feature type="domain" description="FDX-ACB" evidence="1">
    <location>
        <begin position="799"/>
        <end position="891"/>
    </location>
</feature>
<feature type="region of interest" description="Insert">
    <location>
        <begin position="442"/>
        <end position="518"/>
    </location>
</feature>
<feature type="binding site" evidence="1">
    <location>
        <position position="547"/>
    </location>
    <ligand>
        <name>Mg(2+)</name>
        <dbReference type="ChEBI" id="CHEBI:18420"/>
        <note>shared with alpha subunit</note>
    </ligand>
</feature>
<feature type="binding site" evidence="1">
    <location>
        <position position="553"/>
    </location>
    <ligand>
        <name>Mg(2+)</name>
        <dbReference type="ChEBI" id="CHEBI:18420"/>
        <note>shared with alpha subunit</note>
    </ligand>
</feature>
<feature type="binding site" evidence="1">
    <location>
        <position position="556"/>
    </location>
    <ligand>
        <name>Mg(2+)</name>
        <dbReference type="ChEBI" id="CHEBI:18420"/>
        <note>shared with alpha subunit</note>
    </ligand>
</feature>
<feature type="binding site" evidence="1">
    <location>
        <position position="557"/>
    </location>
    <ligand>
        <name>Mg(2+)</name>
        <dbReference type="ChEBI" id="CHEBI:18420"/>
        <note>shared with alpha subunit</note>
    </ligand>
</feature>
<proteinExistence type="inferred from homology"/>
<organism>
    <name type="scientific">Symbiobacterium thermophilum (strain DSM 24528 / JCM 14929 / IAM 14863 / T)</name>
    <dbReference type="NCBI Taxonomy" id="292459"/>
    <lineage>
        <taxon>Bacteria</taxon>
        <taxon>Bacillati</taxon>
        <taxon>Bacillota</taxon>
        <taxon>Clostridia</taxon>
        <taxon>Eubacteriales</taxon>
        <taxon>Symbiobacteriaceae</taxon>
        <taxon>Symbiobacterium</taxon>
    </lineage>
</organism>
<accession>Q67QF2</accession>
<name>SYFB_SYMTH</name>
<dbReference type="EC" id="6.1.1.20" evidence="1"/>
<dbReference type="EMBL" id="AP006840">
    <property type="protein sequence ID" value="BAD40091.1"/>
    <property type="molecule type" value="Genomic_DNA"/>
</dbReference>
<dbReference type="RefSeq" id="WP_011195238.1">
    <property type="nucleotide sequence ID" value="NC_006177.1"/>
</dbReference>
<dbReference type="SMR" id="Q67QF2"/>
<dbReference type="STRING" id="292459.STH1106"/>
<dbReference type="KEGG" id="sth:STH1106"/>
<dbReference type="eggNOG" id="COG0072">
    <property type="taxonomic scope" value="Bacteria"/>
</dbReference>
<dbReference type="eggNOG" id="COG0073">
    <property type="taxonomic scope" value="Bacteria"/>
</dbReference>
<dbReference type="HOGENOM" id="CLU_016891_0_0_9"/>
<dbReference type="OrthoDB" id="9805455at2"/>
<dbReference type="Proteomes" id="UP000000417">
    <property type="component" value="Chromosome"/>
</dbReference>
<dbReference type="GO" id="GO:0009328">
    <property type="term" value="C:phenylalanine-tRNA ligase complex"/>
    <property type="evidence" value="ECO:0007669"/>
    <property type="project" value="TreeGrafter"/>
</dbReference>
<dbReference type="GO" id="GO:0005524">
    <property type="term" value="F:ATP binding"/>
    <property type="evidence" value="ECO:0007669"/>
    <property type="project" value="UniProtKB-UniRule"/>
</dbReference>
<dbReference type="GO" id="GO:0140096">
    <property type="term" value="F:catalytic activity, acting on a protein"/>
    <property type="evidence" value="ECO:0007669"/>
    <property type="project" value="UniProtKB-ARBA"/>
</dbReference>
<dbReference type="GO" id="GO:0000287">
    <property type="term" value="F:magnesium ion binding"/>
    <property type="evidence" value="ECO:0007669"/>
    <property type="project" value="UniProtKB-UniRule"/>
</dbReference>
<dbReference type="GO" id="GO:0004826">
    <property type="term" value="F:phenylalanine-tRNA ligase activity"/>
    <property type="evidence" value="ECO:0007669"/>
    <property type="project" value="UniProtKB-UniRule"/>
</dbReference>
<dbReference type="GO" id="GO:0016740">
    <property type="term" value="F:transferase activity"/>
    <property type="evidence" value="ECO:0007669"/>
    <property type="project" value="UniProtKB-ARBA"/>
</dbReference>
<dbReference type="GO" id="GO:0000049">
    <property type="term" value="F:tRNA binding"/>
    <property type="evidence" value="ECO:0007669"/>
    <property type="project" value="UniProtKB-KW"/>
</dbReference>
<dbReference type="GO" id="GO:0006432">
    <property type="term" value="P:phenylalanyl-tRNA aminoacylation"/>
    <property type="evidence" value="ECO:0007669"/>
    <property type="project" value="UniProtKB-UniRule"/>
</dbReference>
<dbReference type="CDD" id="cd00769">
    <property type="entry name" value="PheRS_beta_core"/>
    <property type="match status" value="1"/>
</dbReference>
<dbReference type="CDD" id="cd02796">
    <property type="entry name" value="tRNA_bind_bactPheRS"/>
    <property type="match status" value="1"/>
</dbReference>
<dbReference type="FunFam" id="2.40.50.140:FF:000045">
    <property type="entry name" value="Phenylalanine--tRNA ligase beta subunit"/>
    <property type="match status" value="1"/>
</dbReference>
<dbReference type="FunFam" id="3.30.70.380:FF:000001">
    <property type="entry name" value="Phenylalanine--tRNA ligase beta subunit"/>
    <property type="match status" value="1"/>
</dbReference>
<dbReference type="FunFam" id="3.50.40.10:FF:000001">
    <property type="entry name" value="Phenylalanine--tRNA ligase beta subunit"/>
    <property type="match status" value="1"/>
</dbReference>
<dbReference type="Gene3D" id="3.30.56.10">
    <property type="match status" value="2"/>
</dbReference>
<dbReference type="Gene3D" id="3.30.930.10">
    <property type="entry name" value="Bira Bifunctional Protein, Domain 2"/>
    <property type="match status" value="1"/>
</dbReference>
<dbReference type="Gene3D" id="3.30.70.380">
    <property type="entry name" value="Ferrodoxin-fold anticodon-binding domain"/>
    <property type="match status" value="1"/>
</dbReference>
<dbReference type="Gene3D" id="2.40.50.140">
    <property type="entry name" value="Nucleic acid-binding proteins"/>
    <property type="match status" value="1"/>
</dbReference>
<dbReference type="Gene3D" id="3.50.40.10">
    <property type="entry name" value="Phenylalanyl-trna Synthetase, Chain B, domain 3"/>
    <property type="match status" value="1"/>
</dbReference>
<dbReference type="HAMAP" id="MF_00283">
    <property type="entry name" value="Phe_tRNA_synth_beta1"/>
    <property type="match status" value="1"/>
</dbReference>
<dbReference type="InterPro" id="IPR045864">
    <property type="entry name" value="aa-tRNA-synth_II/BPL/LPL"/>
</dbReference>
<dbReference type="InterPro" id="IPR005146">
    <property type="entry name" value="B3/B4_tRNA-bd"/>
</dbReference>
<dbReference type="InterPro" id="IPR009061">
    <property type="entry name" value="DNA-bd_dom_put_sf"/>
</dbReference>
<dbReference type="InterPro" id="IPR005121">
    <property type="entry name" value="Fdx_antiC-bd"/>
</dbReference>
<dbReference type="InterPro" id="IPR036690">
    <property type="entry name" value="Fdx_antiC-bd_sf"/>
</dbReference>
<dbReference type="InterPro" id="IPR012340">
    <property type="entry name" value="NA-bd_OB-fold"/>
</dbReference>
<dbReference type="InterPro" id="IPR045060">
    <property type="entry name" value="Phe-tRNA-ligase_IIc_bsu"/>
</dbReference>
<dbReference type="InterPro" id="IPR004532">
    <property type="entry name" value="Phe-tRNA-ligase_IIc_bsu_bact"/>
</dbReference>
<dbReference type="InterPro" id="IPR020825">
    <property type="entry name" value="Phe-tRNA_synthase-like_B3/B4"/>
</dbReference>
<dbReference type="InterPro" id="IPR041616">
    <property type="entry name" value="PheRS_beta_core"/>
</dbReference>
<dbReference type="InterPro" id="IPR002547">
    <property type="entry name" value="tRNA-bd_dom"/>
</dbReference>
<dbReference type="InterPro" id="IPR033714">
    <property type="entry name" value="tRNA_bind_bactPheRS"/>
</dbReference>
<dbReference type="InterPro" id="IPR005147">
    <property type="entry name" value="tRNA_synthase_B5-dom"/>
</dbReference>
<dbReference type="NCBIfam" id="TIGR00472">
    <property type="entry name" value="pheT_bact"/>
    <property type="match status" value="1"/>
</dbReference>
<dbReference type="PANTHER" id="PTHR10947:SF0">
    <property type="entry name" value="PHENYLALANINE--TRNA LIGASE BETA SUBUNIT"/>
    <property type="match status" value="1"/>
</dbReference>
<dbReference type="PANTHER" id="PTHR10947">
    <property type="entry name" value="PHENYLALANYL-TRNA SYNTHETASE BETA CHAIN AND LEUCINE-RICH REPEAT-CONTAINING PROTEIN 47"/>
    <property type="match status" value="1"/>
</dbReference>
<dbReference type="Pfam" id="PF03483">
    <property type="entry name" value="B3_4"/>
    <property type="match status" value="1"/>
</dbReference>
<dbReference type="Pfam" id="PF03484">
    <property type="entry name" value="B5"/>
    <property type="match status" value="1"/>
</dbReference>
<dbReference type="Pfam" id="PF03147">
    <property type="entry name" value="FDX-ACB"/>
    <property type="match status" value="1"/>
</dbReference>
<dbReference type="Pfam" id="PF01588">
    <property type="entry name" value="tRNA_bind"/>
    <property type="match status" value="1"/>
</dbReference>
<dbReference type="Pfam" id="PF17759">
    <property type="entry name" value="tRNA_synthFbeta"/>
    <property type="match status" value="1"/>
</dbReference>
<dbReference type="SMART" id="SM00873">
    <property type="entry name" value="B3_4"/>
    <property type="match status" value="1"/>
</dbReference>
<dbReference type="SMART" id="SM00874">
    <property type="entry name" value="B5"/>
    <property type="match status" value="1"/>
</dbReference>
<dbReference type="SMART" id="SM00896">
    <property type="entry name" value="FDX-ACB"/>
    <property type="match status" value="1"/>
</dbReference>
<dbReference type="SUPFAM" id="SSF54991">
    <property type="entry name" value="Anticodon-binding domain of PheRS"/>
    <property type="match status" value="1"/>
</dbReference>
<dbReference type="SUPFAM" id="SSF55681">
    <property type="entry name" value="Class II aaRS and biotin synthetases"/>
    <property type="match status" value="1"/>
</dbReference>
<dbReference type="SUPFAM" id="SSF50249">
    <property type="entry name" value="Nucleic acid-binding proteins"/>
    <property type="match status" value="1"/>
</dbReference>
<dbReference type="SUPFAM" id="SSF56037">
    <property type="entry name" value="PheT/TilS domain"/>
    <property type="match status" value="1"/>
</dbReference>
<dbReference type="SUPFAM" id="SSF46955">
    <property type="entry name" value="Putative DNA-binding domain"/>
    <property type="match status" value="1"/>
</dbReference>
<dbReference type="PROSITE" id="PS51483">
    <property type="entry name" value="B5"/>
    <property type="match status" value="1"/>
</dbReference>
<dbReference type="PROSITE" id="PS51447">
    <property type="entry name" value="FDX_ACB"/>
    <property type="match status" value="1"/>
</dbReference>
<dbReference type="PROSITE" id="PS50886">
    <property type="entry name" value="TRBD"/>
    <property type="match status" value="1"/>
</dbReference>
<comment type="catalytic activity">
    <reaction evidence="1">
        <text>tRNA(Phe) + L-phenylalanine + ATP = L-phenylalanyl-tRNA(Phe) + AMP + diphosphate + H(+)</text>
        <dbReference type="Rhea" id="RHEA:19413"/>
        <dbReference type="Rhea" id="RHEA-COMP:9668"/>
        <dbReference type="Rhea" id="RHEA-COMP:9699"/>
        <dbReference type="ChEBI" id="CHEBI:15378"/>
        <dbReference type="ChEBI" id="CHEBI:30616"/>
        <dbReference type="ChEBI" id="CHEBI:33019"/>
        <dbReference type="ChEBI" id="CHEBI:58095"/>
        <dbReference type="ChEBI" id="CHEBI:78442"/>
        <dbReference type="ChEBI" id="CHEBI:78531"/>
        <dbReference type="ChEBI" id="CHEBI:456215"/>
        <dbReference type="EC" id="6.1.1.20"/>
    </reaction>
</comment>
<comment type="cofactor">
    <cofactor evidence="1">
        <name>Mg(2+)</name>
        <dbReference type="ChEBI" id="CHEBI:18420"/>
    </cofactor>
    <text evidence="1">Binds 2 magnesium ions per tetramer.</text>
</comment>
<comment type="subunit">
    <text evidence="1">Tetramer of two alpha and two beta subunits.</text>
</comment>
<comment type="subcellular location">
    <subcellularLocation>
        <location>Cytoplasm</location>
    </subcellularLocation>
</comment>
<comment type="similarity">
    <text evidence="1">Belongs to the phenylalanyl-tRNA synthetase beta subunit family. Type 1 subfamily.</text>
</comment>
<evidence type="ECO:0000255" key="1">
    <source>
        <dbReference type="HAMAP-Rule" id="MF_00283"/>
    </source>
</evidence>
<sequence length="892" mass="96117">MRVSYNWLKDYVKVGLSPQELAERLTARGVVVENVVRANPGVEGVVVGRVVAMERHPNADTLWVCQVDVGGGRVLQILTGAQNVTVGALVPAAVPGAKLPGGVTMGVKKLRGLDSHGMLCSEAELQVGDDADGILILPPEPGLEPGMDVAEVLGLNDWIFELDLTANYAAHCQSMLGVAQEVAALVGGEVNRPSTYTPDAPGTDVRNLIAVQIDAPDLCSRYVARVVRGVKIGPSPLWLQARLRAAGMRPINNIVDIANFVMLETGQPLHTFDYAQIRGQRIIVRRARTGERFTTLDGQERVMDESVLVIADAERPVALAGVMGGEDSEVTDQTADILIESAHFDNINNRRTSLRYNLPSEASKRFTKGVDPSGCVAAADRAAQLMAELAGGTVVAGHVDVCPRPAVPPVILLRTERANALTGLKLTPERMAEHLRSLGMAVLTPADLAADLALGAPESDEEPGEDLGGHPVWTALHQVSPVPSDPVVYRTWAEAAWAEVEDAGSRLEALLGGGESDGKAAASGEGVSPGGASDGILVVVVPTRRSDVAVEVDLIEEIARCEGYDAIPLELPVLSSHRGGRSRQGEVKLAARRALAAAGLTEVLTHSLTHPRVYDMLALPEDDPNRRCLALANPMYEDRSTLRTMLLPCLLDVVRYNANRQVRDLAIFEISHVYRPVEGEQLPDEPLMIGLAMTGNLAPLGWNSPERPADFFALKGVVEHLLAELGVPDARFERSAHPSLHPGRQAALVVGGKPVGLLGELHPQVQERWELPGRVYVAELAFAPLMEAMLPQAVYRPVPRFPAVTRDVAVVVDLDLTAHRLETAIREAGGDLLEEVRLFDVYQGERVAEGRRSLAYRLVYRAADRTLTDEELEPVHNRVREALKALGAELRS</sequence>
<gene>
    <name evidence="1" type="primary">pheT</name>
    <name type="ordered locus">STH1106</name>
</gene>
<keyword id="KW-0030">Aminoacyl-tRNA synthetase</keyword>
<keyword id="KW-0067">ATP-binding</keyword>
<keyword id="KW-0963">Cytoplasm</keyword>
<keyword id="KW-0436">Ligase</keyword>
<keyword id="KW-0460">Magnesium</keyword>
<keyword id="KW-0479">Metal-binding</keyword>
<keyword id="KW-0547">Nucleotide-binding</keyword>
<keyword id="KW-0648">Protein biosynthesis</keyword>
<keyword id="KW-1185">Reference proteome</keyword>
<keyword id="KW-0694">RNA-binding</keyword>
<keyword id="KW-0820">tRNA-binding</keyword>